<feature type="signal peptide" evidence="2">
    <location>
        <begin position="1"/>
        <end position="21"/>
    </location>
</feature>
<feature type="propeptide" id="PRO_0000022900" evidence="1">
    <location>
        <begin position="22"/>
        <end position="27"/>
    </location>
</feature>
<feature type="chain" id="PRO_0000022901" description="Basic phospholipase A2 cL038">
    <location>
        <begin position="28"/>
        <end position="145"/>
    </location>
</feature>
<feature type="active site" evidence="1">
    <location>
        <position position="75"/>
    </location>
</feature>
<feature type="active site" evidence="1">
    <location>
        <position position="119"/>
    </location>
</feature>
<feature type="binding site" evidence="1">
    <location>
        <position position="55"/>
    </location>
    <ligand>
        <name>Ca(2+)</name>
        <dbReference type="ChEBI" id="CHEBI:29108"/>
    </ligand>
</feature>
<feature type="binding site" evidence="1">
    <location>
        <position position="57"/>
    </location>
    <ligand>
        <name>Ca(2+)</name>
        <dbReference type="ChEBI" id="CHEBI:29108"/>
    </ligand>
</feature>
<feature type="binding site" evidence="1">
    <location>
        <position position="59"/>
    </location>
    <ligand>
        <name>Ca(2+)</name>
        <dbReference type="ChEBI" id="CHEBI:29108"/>
    </ligand>
</feature>
<feature type="binding site" evidence="1">
    <location>
        <position position="76"/>
    </location>
    <ligand>
        <name>Ca(2+)</name>
        <dbReference type="ChEBI" id="CHEBI:29108"/>
    </ligand>
</feature>
<feature type="disulfide bond" evidence="1">
    <location>
        <begin position="38"/>
        <end position="98"/>
    </location>
</feature>
<feature type="disulfide bond" evidence="1">
    <location>
        <begin position="54"/>
        <end position="144"/>
    </location>
</feature>
<feature type="disulfide bond" evidence="1">
    <location>
        <begin position="56"/>
        <end position="72"/>
    </location>
</feature>
<feature type="disulfide bond" evidence="1">
    <location>
        <begin position="71"/>
        <end position="125"/>
    </location>
</feature>
<feature type="disulfide bond" evidence="1">
    <location>
        <begin position="78"/>
        <end position="118"/>
    </location>
</feature>
<feature type="disulfide bond" evidence="1">
    <location>
        <begin position="87"/>
        <end position="111"/>
    </location>
</feature>
<feature type="disulfide bond" evidence="1">
    <location>
        <begin position="105"/>
        <end position="116"/>
    </location>
</feature>
<evidence type="ECO:0000250" key="1"/>
<evidence type="ECO:0000255" key="2"/>
<evidence type="ECO:0000255" key="3">
    <source>
        <dbReference type="PROSITE-ProRule" id="PRU10035"/>
    </source>
</evidence>
<evidence type="ECO:0000255" key="4">
    <source>
        <dbReference type="PROSITE-ProRule" id="PRU10036"/>
    </source>
</evidence>
<evidence type="ECO:0000305" key="5"/>
<organism>
    <name type="scientific">Laticauda semifasciata</name>
    <name type="common">Black-banded sea krait</name>
    <name type="synonym">Pseudolaticauda semifasciata</name>
    <dbReference type="NCBI Taxonomy" id="8631"/>
    <lineage>
        <taxon>Eukaryota</taxon>
        <taxon>Metazoa</taxon>
        <taxon>Chordata</taxon>
        <taxon>Craniata</taxon>
        <taxon>Vertebrata</taxon>
        <taxon>Euteleostomi</taxon>
        <taxon>Lepidosauria</taxon>
        <taxon>Squamata</taxon>
        <taxon>Bifurcata</taxon>
        <taxon>Unidentata</taxon>
        <taxon>Episquamata</taxon>
        <taxon>Toxicofera</taxon>
        <taxon>Serpentes</taxon>
        <taxon>Colubroidea</taxon>
        <taxon>Elapidae</taxon>
        <taxon>Laticaudinae</taxon>
        <taxon>Laticauda</taxon>
    </lineage>
</organism>
<name>PA2B_LATSE</name>
<comment type="function">
    <text evidence="1">PLA2 catalyzes the calcium-dependent hydrolysis of the 2-acyl groups in 3-sn-phosphoglycerides.</text>
</comment>
<comment type="catalytic activity">
    <reaction evidence="3 4">
        <text>a 1,2-diacyl-sn-glycero-3-phosphocholine + H2O = a 1-acyl-sn-glycero-3-phosphocholine + a fatty acid + H(+)</text>
        <dbReference type="Rhea" id="RHEA:15801"/>
        <dbReference type="ChEBI" id="CHEBI:15377"/>
        <dbReference type="ChEBI" id="CHEBI:15378"/>
        <dbReference type="ChEBI" id="CHEBI:28868"/>
        <dbReference type="ChEBI" id="CHEBI:57643"/>
        <dbReference type="ChEBI" id="CHEBI:58168"/>
        <dbReference type="EC" id="3.1.1.4"/>
    </reaction>
</comment>
<comment type="cofactor">
    <cofactor evidence="1">
        <name>Ca(2+)</name>
        <dbReference type="ChEBI" id="CHEBI:29108"/>
    </cofactor>
    <text evidence="1">Binds 1 Ca(2+) ion.</text>
</comment>
<comment type="subcellular location">
    <subcellularLocation>
        <location evidence="1">Secreted</location>
    </subcellularLocation>
</comment>
<comment type="tissue specificity">
    <text>Expressed by the venom gland.</text>
</comment>
<comment type="similarity">
    <text evidence="5">Belongs to the phospholipase A2 family. Group I subfamily. D49 sub-subfamily.</text>
</comment>
<accession>Q9I846</accession>
<protein>
    <recommendedName>
        <fullName>Basic phospholipase A2 cL038</fullName>
        <shortName>svPLA2</shortName>
        <ecNumber>3.1.1.4</ecNumber>
    </recommendedName>
    <alternativeName>
        <fullName>Phosphatidylcholine 2-acylhydrolase</fullName>
    </alternativeName>
</protein>
<proteinExistence type="evidence at transcript level"/>
<keyword id="KW-0106">Calcium</keyword>
<keyword id="KW-1015">Disulfide bond</keyword>
<keyword id="KW-0378">Hydrolase</keyword>
<keyword id="KW-0442">Lipid degradation</keyword>
<keyword id="KW-0443">Lipid metabolism</keyword>
<keyword id="KW-0479">Metal-binding</keyword>
<keyword id="KW-0964">Secreted</keyword>
<keyword id="KW-0732">Signal</keyword>
<sequence>MYPAHLLVLLAVCVSLLGASAIPPLPLNLVQFTYLIQCANKGSRASYHYADYGCYCGAGGSGTPVDELDRCCKVHDDCYGEAEKMGCYPKLTMYNYYCGTEGPYCNTKTDCQRYVCACDLQAAKCFARSPYNNKNYNIDTSKRCK</sequence>
<dbReference type="EC" id="3.1.1.4"/>
<dbReference type="EMBL" id="AB037410">
    <property type="protein sequence ID" value="BAB03297.1"/>
    <property type="molecule type" value="mRNA"/>
</dbReference>
<dbReference type="SMR" id="Q9I846"/>
<dbReference type="GO" id="GO:0005576">
    <property type="term" value="C:extracellular region"/>
    <property type="evidence" value="ECO:0007669"/>
    <property type="project" value="UniProtKB-SubCell"/>
</dbReference>
<dbReference type="GO" id="GO:0005509">
    <property type="term" value="F:calcium ion binding"/>
    <property type="evidence" value="ECO:0007669"/>
    <property type="project" value="InterPro"/>
</dbReference>
<dbReference type="GO" id="GO:0047498">
    <property type="term" value="F:calcium-dependent phospholipase A2 activity"/>
    <property type="evidence" value="ECO:0007669"/>
    <property type="project" value="TreeGrafter"/>
</dbReference>
<dbReference type="GO" id="GO:0005543">
    <property type="term" value="F:phospholipid binding"/>
    <property type="evidence" value="ECO:0007669"/>
    <property type="project" value="TreeGrafter"/>
</dbReference>
<dbReference type="GO" id="GO:0050482">
    <property type="term" value="P:arachidonate secretion"/>
    <property type="evidence" value="ECO:0007669"/>
    <property type="project" value="InterPro"/>
</dbReference>
<dbReference type="GO" id="GO:0016042">
    <property type="term" value="P:lipid catabolic process"/>
    <property type="evidence" value="ECO:0007669"/>
    <property type="project" value="UniProtKB-KW"/>
</dbReference>
<dbReference type="GO" id="GO:0006644">
    <property type="term" value="P:phospholipid metabolic process"/>
    <property type="evidence" value="ECO:0007669"/>
    <property type="project" value="InterPro"/>
</dbReference>
<dbReference type="CDD" id="cd00125">
    <property type="entry name" value="PLA2c"/>
    <property type="match status" value="1"/>
</dbReference>
<dbReference type="FunFam" id="1.20.90.10:FF:000007">
    <property type="entry name" value="Acidic phospholipase A2"/>
    <property type="match status" value="1"/>
</dbReference>
<dbReference type="Gene3D" id="1.20.90.10">
    <property type="entry name" value="Phospholipase A2 domain"/>
    <property type="match status" value="1"/>
</dbReference>
<dbReference type="InterPro" id="IPR001211">
    <property type="entry name" value="PLipase_A2"/>
</dbReference>
<dbReference type="InterPro" id="IPR033112">
    <property type="entry name" value="PLipase_A2_Asp_AS"/>
</dbReference>
<dbReference type="InterPro" id="IPR016090">
    <property type="entry name" value="PLipase_A2_dom"/>
</dbReference>
<dbReference type="InterPro" id="IPR036444">
    <property type="entry name" value="PLipase_A2_dom_sf"/>
</dbReference>
<dbReference type="InterPro" id="IPR033113">
    <property type="entry name" value="PLipase_A2_His_AS"/>
</dbReference>
<dbReference type="PANTHER" id="PTHR11716:SF51">
    <property type="entry name" value="PHOSPHOLIPASE A2"/>
    <property type="match status" value="1"/>
</dbReference>
<dbReference type="PANTHER" id="PTHR11716">
    <property type="entry name" value="PHOSPHOLIPASE A2 FAMILY MEMBER"/>
    <property type="match status" value="1"/>
</dbReference>
<dbReference type="Pfam" id="PF00068">
    <property type="entry name" value="Phospholip_A2_1"/>
    <property type="match status" value="1"/>
</dbReference>
<dbReference type="PRINTS" id="PR00389">
    <property type="entry name" value="PHPHLIPASEA2"/>
</dbReference>
<dbReference type="SMART" id="SM00085">
    <property type="entry name" value="PA2c"/>
    <property type="match status" value="1"/>
</dbReference>
<dbReference type="SUPFAM" id="SSF48619">
    <property type="entry name" value="Phospholipase A2, PLA2"/>
    <property type="match status" value="1"/>
</dbReference>
<dbReference type="PROSITE" id="PS00119">
    <property type="entry name" value="PA2_ASP"/>
    <property type="match status" value="1"/>
</dbReference>
<dbReference type="PROSITE" id="PS00118">
    <property type="entry name" value="PA2_HIS"/>
    <property type="match status" value="1"/>
</dbReference>
<reference key="1">
    <citation type="submission" date="2000-01" db="EMBL/GenBank/DDBJ databases">
        <authorList>
            <person name="Tamiya T."/>
            <person name="Fujimi T.J."/>
        </authorList>
    </citation>
    <scope>NUCLEOTIDE SEQUENCE [MRNA]</scope>
    <source>
        <tissue>Venom gland</tissue>
    </source>
</reference>